<evidence type="ECO:0000255" key="1">
    <source>
        <dbReference type="HAMAP-Rule" id="MF_00048"/>
    </source>
</evidence>
<evidence type="ECO:0000256" key="2">
    <source>
        <dbReference type="SAM" id="MobiDB-lite"/>
    </source>
</evidence>
<feature type="chain" id="PRO_1000200144" description="UPF0102 protein YraN">
    <location>
        <begin position="1"/>
        <end position="131"/>
    </location>
</feature>
<feature type="region of interest" description="Disordered" evidence="2">
    <location>
        <begin position="1"/>
        <end position="20"/>
    </location>
</feature>
<feature type="compositionally biased region" description="Polar residues" evidence="2">
    <location>
        <begin position="1"/>
        <end position="19"/>
    </location>
</feature>
<protein>
    <recommendedName>
        <fullName evidence="1">UPF0102 protein YraN</fullName>
    </recommendedName>
</protein>
<dbReference type="EMBL" id="CU928160">
    <property type="protein sequence ID" value="CAR00112.1"/>
    <property type="molecule type" value="Genomic_DNA"/>
</dbReference>
<dbReference type="RefSeq" id="WP_000246859.1">
    <property type="nucleotide sequence ID" value="NC_011741.1"/>
</dbReference>
<dbReference type="SMR" id="B7M056"/>
<dbReference type="KEGG" id="ecr:ECIAI1_3298"/>
<dbReference type="HOGENOM" id="CLU_115353_1_0_6"/>
<dbReference type="GO" id="GO:0003676">
    <property type="term" value="F:nucleic acid binding"/>
    <property type="evidence" value="ECO:0007669"/>
    <property type="project" value="InterPro"/>
</dbReference>
<dbReference type="CDD" id="cd20736">
    <property type="entry name" value="PoNe_Nuclease"/>
    <property type="match status" value="1"/>
</dbReference>
<dbReference type="Gene3D" id="3.40.1350.10">
    <property type="match status" value="1"/>
</dbReference>
<dbReference type="HAMAP" id="MF_00048">
    <property type="entry name" value="UPF0102"/>
    <property type="match status" value="1"/>
</dbReference>
<dbReference type="InterPro" id="IPR011335">
    <property type="entry name" value="Restrct_endonuc-II-like"/>
</dbReference>
<dbReference type="InterPro" id="IPR011856">
    <property type="entry name" value="tRNA_endonuc-like_dom_sf"/>
</dbReference>
<dbReference type="InterPro" id="IPR003509">
    <property type="entry name" value="UPF0102_YraN-like"/>
</dbReference>
<dbReference type="NCBIfam" id="NF009150">
    <property type="entry name" value="PRK12497.1-3"/>
    <property type="match status" value="1"/>
</dbReference>
<dbReference type="NCBIfam" id="TIGR00252">
    <property type="entry name" value="YraN family protein"/>
    <property type="match status" value="1"/>
</dbReference>
<dbReference type="PANTHER" id="PTHR34039">
    <property type="entry name" value="UPF0102 PROTEIN YRAN"/>
    <property type="match status" value="1"/>
</dbReference>
<dbReference type="PANTHER" id="PTHR34039:SF1">
    <property type="entry name" value="UPF0102 PROTEIN YRAN"/>
    <property type="match status" value="1"/>
</dbReference>
<dbReference type="Pfam" id="PF02021">
    <property type="entry name" value="UPF0102"/>
    <property type="match status" value="1"/>
</dbReference>
<dbReference type="SUPFAM" id="SSF52980">
    <property type="entry name" value="Restriction endonuclease-like"/>
    <property type="match status" value="1"/>
</dbReference>
<proteinExistence type="inferred from homology"/>
<reference key="1">
    <citation type="journal article" date="2009" name="PLoS Genet.">
        <title>Organised genome dynamics in the Escherichia coli species results in highly diverse adaptive paths.</title>
        <authorList>
            <person name="Touchon M."/>
            <person name="Hoede C."/>
            <person name="Tenaillon O."/>
            <person name="Barbe V."/>
            <person name="Baeriswyl S."/>
            <person name="Bidet P."/>
            <person name="Bingen E."/>
            <person name="Bonacorsi S."/>
            <person name="Bouchier C."/>
            <person name="Bouvet O."/>
            <person name="Calteau A."/>
            <person name="Chiapello H."/>
            <person name="Clermont O."/>
            <person name="Cruveiller S."/>
            <person name="Danchin A."/>
            <person name="Diard M."/>
            <person name="Dossat C."/>
            <person name="Karoui M.E."/>
            <person name="Frapy E."/>
            <person name="Garry L."/>
            <person name="Ghigo J.M."/>
            <person name="Gilles A.M."/>
            <person name="Johnson J."/>
            <person name="Le Bouguenec C."/>
            <person name="Lescat M."/>
            <person name="Mangenot S."/>
            <person name="Martinez-Jehanne V."/>
            <person name="Matic I."/>
            <person name="Nassif X."/>
            <person name="Oztas S."/>
            <person name="Petit M.A."/>
            <person name="Pichon C."/>
            <person name="Rouy Z."/>
            <person name="Ruf C.S."/>
            <person name="Schneider D."/>
            <person name="Tourret J."/>
            <person name="Vacherie B."/>
            <person name="Vallenet D."/>
            <person name="Medigue C."/>
            <person name="Rocha E.P.C."/>
            <person name="Denamur E."/>
        </authorList>
    </citation>
    <scope>NUCLEOTIDE SEQUENCE [LARGE SCALE GENOMIC DNA]</scope>
    <source>
        <strain>IAI1</strain>
    </source>
</reference>
<gene>
    <name evidence="1" type="primary">yraN</name>
    <name type="ordered locus">ECIAI1_3298</name>
</gene>
<organism>
    <name type="scientific">Escherichia coli O8 (strain IAI1)</name>
    <dbReference type="NCBI Taxonomy" id="585034"/>
    <lineage>
        <taxon>Bacteria</taxon>
        <taxon>Pseudomonadati</taxon>
        <taxon>Pseudomonadota</taxon>
        <taxon>Gammaproteobacteria</taxon>
        <taxon>Enterobacterales</taxon>
        <taxon>Enterobacteriaceae</taxon>
        <taxon>Escherichia</taxon>
    </lineage>
</organism>
<comment type="similarity">
    <text evidence="1">Belongs to the UPF0102 family.</text>
</comment>
<sequence length="131" mass="14826">MATVPTRSGSPRQLTTKQTGDAWEVQARRWLEGKGLRFVAANVNERGGEIDLIMREGRTTVFVEVRYRRSVLYGGAAASVTRSKQHKLLQTARLWLARHNGSFDTVDCRFDVVAFTGNEVEWIKDAFNDHS</sequence>
<name>YRAN_ECO8A</name>
<accession>B7M056</accession>